<gene>
    <name type="ordered locus">Hhal_2130</name>
</gene>
<feature type="chain" id="PRO_0000383250" description="Nucleotide-binding protein Hhal_2130">
    <location>
        <begin position="1"/>
        <end position="287"/>
    </location>
</feature>
<feature type="binding site" evidence="1">
    <location>
        <begin position="11"/>
        <end position="18"/>
    </location>
    <ligand>
        <name>ATP</name>
        <dbReference type="ChEBI" id="CHEBI:30616"/>
    </ligand>
</feature>
<feature type="binding site" evidence="1">
    <location>
        <begin position="63"/>
        <end position="66"/>
    </location>
    <ligand>
        <name>GTP</name>
        <dbReference type="ChEBI" id="CHEBI:37565"/>
    </ligand>
</feature>
<dbReference type="EMBL" id="CP000544">
    <property type="protein sequence ID" value="ABM62894.1"/>
    <property type="molecule type" value="Genomic_DNA"/>
</dbReference>
<dbReference type="RefSeq" id="WP_011814916.1">
    <property type="nucleotide sequence ID" value="NC_008789.1"/>
</dbReference>
<dbReference type="SMR" id="A1WYY2"/>
<dbReference type="STRING" id="349124.Hhal_2130"/>
<dbReference type="KEGG" id="hha:Hhal_2130"/>
<dbReference type="eggNOG" id="COG1660">
    <property type="taxonomic scope" value="Bacteria"/>
</dbReference>
<dbReference type="HOGENOM" id="CLU_059558_1_1_6"/>
<dbReference type="OrthoDB" id="9784461at2"/>
<dbReference type="Proteomes" id="UP000000647">
    <property type="component" value="Chromosome"/>
</dbReference>
<dbReference type="GO" id="GO:0005524">
    <property type="term" value="F:ATP binding"/>
    <property type="evidence" value="ECO:0007669"/>
    <property type="project" value="UniProtKB-UniRule"/>
</dbReference>
<dbReference type="GO" id="GO:0005525">
    <property type="term" value="F:GTP binding"/>
    <property type="evidence" value="ECO:0007669"/>
    <property type="project" value="UniProtKB-UniRule"/>
</dbReference>
<dbReference type="HAMAP" id="MF_00636">
    <property type="entry name" value="RapZ_like"/>
    <property type="match status" value="1"/>
</dbReference>
<dbReference type="InterPro" id="IPR027417">
    <property type="entry name" value="P-loop_NTPase"/>
</dbReference>
<dbReference type="InterPro" id="IPR005337">
    <property type="entry name" value="RapZ-like"/>
</dbReference>
<dbReference type="InterPro" id="IPR053930">
    <property type="entry name" value="RapZ-like_N"/>
</dbReference>
<dbReference type="InterPro" id="IPR053931">
    <property type="entry name" value="RapZ_C"/>
</dbReference>
<dbReference type="NCBIfam" id="NF003828">
    <property type="entry name" value="PRK05416.1"/>
    <property type="match status" value="1"/>
</dbReference>
<dbReference type="PANTHER" id="PTHR30448">
    <property type="entry name" value="RNASE ADAPTER PROTEIN RAPZ"/>
    <property type="match status" value="1"/>
</dbReference>
<dbReference type="PANTHER" id="PTHR30448:SF0">
    <property type="entry name" value="RNASE ADAPTER PROTEIN RAPZ"/>
    <property type="match status" value="1"/>
</dbReference>
<dbReference type="Pfam" id="PF22740">
    <property type="entry name" value="PapZ_C"/>
    <property type="match status" value="1"/>
</dbReference>
<dbReference type="Pfam" id="PF03668">
    <property type="entry name" value="RapZ-like_N"/>
    <property type="match status" value="1"/>
</dbReference>
<dbReference type="PIRSF" id="PIRSF005052">
    <property type="entry name" value="P-loopkin"/>
    <property type="match status" value="1"/>
</dbReference>
<dbReference type="SUPFAM" id="SSF52540">
    <property type="entry name" value="P-loop containing nucleoside triphosphate hydrolases"/>
    <property type="match status" value="1"/>
</dbReference>
<evidence type="ECO:0000255" key="1">
    <source>
        <dbReference type="HAMAP-Rule" id="MF_00636"/>
    </source>
</evidence>
<sequence length="287" mass="31955">MSGLRLIVVSGLSGSGKSVALHTLEDAGYYCIDNLPVSLIGELARYAQNRDAPTGERFAVGLDARNPPHDLQCLPETLTALREQGIATEVLFLYAEDSILMRRYSETRRRHPLAEGDQPLADALRAERTLLEPLREVADWSIDTSRTTVHDLRGLISERVAGERSGLSVLVQSFGFKHGIPTDADYVFDARCLPNPHWEPQLRAYTGCDDCVRAFLESQPETEILFGQIDTLIRYWLPVHQQAGRSYLTVAVGCTGGQHRSVYLAERLAESLQEGCSHVSLRHRELS</sequence>
<comment type="function">
    <text evidence="1">Displays ATPase and GTPase activities.</text>
</comment>
<comment type="similarity">
    <text evidence="1">Belongs to the RapZ-like family.</text>
</comment>
<organism>
    <name type="scientific">Halorhodospira halophila (strain DSM 244 / SL1)</name>
    <name type="common">Ectothiorhodospira halophila (strain DSM 244 / SL1)</name>
    <dbReference type="NCBI Taxonomy" id="349124"/>
    <lineage>
        <taxon>Bacteria</taxon>
        <taxon>Pseudomonadati</taxon>
        <taxon>Pseudomonadota</taxon>
        <taxon>Gammaproteobacteria</taxon>
        <taxon>Chromatiales</taxon>
        <taxon>Ectothiorhodospiraceae</taxon>
        <taxon>Halorhodospira</taxon>
    </lineage>
</organism>
<reference key="1">
    <citation type="submission" date="2006-12" db="EMBL/GenBank/DDBJ databases">
        <title>Complete sequence of Halorhodospira halophila SL1.</title>
        <authorList>
            <consortium name="US DOE Joint Genome Institute"/>
            <person name="Copeland A."/>
            <person name="Lucas S."/>
            <person name="Lapidus A."/>
            <person name="Barry K."/>
            <person name="Detter J.C."/>
            <person name="Glavina del Rio T."/>
            <person name="Hammon N."/>
            <person name="Israni S."/>
            <person name="Dalin E."/>
            <person name="Tice H."/>
            <person name="Pitluck S."/>
            <person name="Saunders E."/>
            <person name="Brettin T."/>
            <person name="Bruce D."/>
            <person name="Han C."/>
            <person name="Tapia R."/>
            <person name="Schmutz J."/>
            <person name="Larimer F."/>
            <person name="Land M."/>
            <person name="Hauser L."/>
            <person name="Kyrpides N."/>
            <person name="Mikhailova N."/>
            <person name="Hoff W."/>
            <person name="Richardson P."/>
        </authorList>
    </citation>
    <scope>NUCLEOTIDE SEQUENCE [LARGE SCALE GENOMIC DNA]</scope>
    <source>
        <strain>DSM 244 / SL1</strain>
    </source>
</reference>
<protein>
    <recommendedName>
        <fullName evidence="1">Nucleotide-binding protein Hhal_2130</fullName>
    </recommendedName>
</protein>
<keyword id="KW-0067">ATP-binding</keyword>
<keyword id="KW-0342">GTP-binding</keyword>
<keyword id="KW-0547">Nucleotide-binding</keyword>
<keyword id="KW-1185">Reference proteome</keyword>
<proteinExistence type="inferred from homology"/>
<name>Y2130_HALHL</name>
<accession>A1WYY2</accession>